<sequence>MTPPRKLHIKSYGCQMNVYDAQRMVDTLAPEGFVETASAEDADLVILNTCHIREKASEKVYSELGRLRVAKDEAARGGRAMQIAVAGCVAQAEGEEIVRRAPVVDVVVGPQSYHHLPELLKRAGNEGRAVETEFPAADKFGFLAQPKPDAIRARGISAFVTVQEGCDKFCTFCVVPYTRGAEVSRPVARIVDDVKRLADNGVRELTLIGQNVNAYHGDGPDGKSWPLGRLLEHLAGIPGIARLRYSTSHPRDVDDSLIAAHRDLAALMPFVHLPVQSGSDRILAAMNRKHTADDYRRVIDRFRAARQDIAFSSDFIVGFPGESEQDFLATLALVTQIGYAAAYSFKYSARPGTPAADMQETVSPAEMDQRLERLQELIDSQQSAFNKAAIGSTVDVLFERPARKDGQIVGRTAFLQPAHVMASPGIIGQILPVRIDSLERYSFLGELVTPRVAREPALSPIATGA</sequence>
<name>MIAB_BRADU</name>
<reference key="1">
    <citation type="journal article" date="2002" name="DNA Res.">
        <title>Complete genomic sequence of nitrogen-fixing symbiotic bacterium Bradyrhizobium japonicum USDA110.</title>
        <authorList>
            <person name="Kaneko T."/>
            <person name="Nakamura Y."/>
            <person name="Sato S."/>
            <person name="Minamisawa K."/>
            <person name="Uchiumi T."/>
            <person name="Sasamoto S."/>
            <person name="Watanabe A."/>
            <person name="Idesawa K."/>
            <person name="Iriguchi M."/>
            <person name="Kawashima K."/>
            <person name="Kohara M."/>
            <person name="Matsumoto M."/>
            <person name="Shimpo S."/>
            <person name="Tsuruoka H."/>
            <person name="Wada T."/>
            <person name="Yamada M."/>
            <person name="Tabata S."/>
        </authorList>
    </citation>
    <scope>NUCLEOTIDE SEQUENCE [LARGE SCALE GENOMIC DNA]</scope>
    <source>
        <strain>JCM 10833 / BCRC 13528 / IAM 13628 / NBRC 14792 / USDA 110</strain>
    </source>
</reference>
<dbReference type="EC" id="2.8.4.3" evidence="1"/>
<dbReference type="EMBL" id="BA000040">
    <property type="protein sequence ID" value="BAC46060.1"/>
    <property type="molecule type" value="Genomic_DNA"/>
</dbReference>
<dbReference type="RefSeq" id="NP_767435.1">
    <property type="nucleotide sequence ID" value="NC_004463.1"/>
</dbReference>
<dbReference type="RefSeq" id="WP_011083617.1">
    <property type="nucleotide sequence ID" value="NC_004463.1"/>
</dbReference>
<dbReference type="SMR" id="Q89W97"/>
<dbReference type="FunCoup" id="Q89W97">
    <property type="interactions" value="664"/>
</dbReference>
<dbReference type="STRING" id="224911.AAV28_00825"/>
<dbReference type="EnsemblBacteria" id="BAC46060">
    <property type="protein sequence ID" value="BAC46060"/>
    <property type="gene ID" value="BAC46060"/>
</dbReference>
<dbReference type="GeneID" id="46488071"/>
<dbReference type="KEGG" id="bja:bll0795"/>
<dbReference type="PATRIC" id="fig|224911.44.peg.170"/>
<dbReference type="eggNOG" id="COG0621">
    <property type="taxonomic scope" value="Bacteria"/>
</dbReference>
<dbReference type="HOGENOM" id="CLU_018697_2_0_5"/>
<dbReference type="InParanoid" id="Q89W97"/>
<dbReference type="OrthoDB" id="9805215at2"/>
<dbReference type="PhylomeDB" id="Q89W97"/>
<dbReference type="Proteomes" id="UP000002526">
    <property type="component" value="Chromosome"/>
</dbReference>
<dbReference type="GO" id="GO:0005829">
    <property type="term" value="C:cytosol"/>
    <property type="evidence" value="ECO:0000318"/>
    <property type="project" value="GO_Central"/>
</dbReference>
<dbReference type="GO" id="GO:0051539">
    <property type="term" value="F:4 iron, 4 sulfur cluster binding"/>
    <property type="evidence" value="ECO:0000318"/>
    <property type="project" value="GO_Central"/>
</dbReference>
<dbReference type="GO" id="GO:0046872">
    <property type="term" value="F:metal ion binding"/>
    <property type="evidence" value="ECO:0007669"/>
    <property type="project" value="UniProtKB-KW"/>
</dbReference>
<dbReference type="GO" id="GO:0035597">
    <property type="term" value="F:N6-isopentenyladenosine methylthiotransferase activity"/>
    <property type="evidence" value="ECO:0000318"/>
    <property type="project" value="GO_Central"/>
</dbReference>
<dbReference type="GO" id="GO:0035600">
    <property type="term" value="P:tRNA methylthiolation"/>
    <property type="evidence" value="ECO:0000318"/>
    <property type="project" value="GO_Central"/>
</dbReference>
<dbReference type="CDD" id="cd01335">
    <property type="entry name" value="Radical_SAM"/>
    <property type="match status" value="1"/>
</dbReference>
<dbReference type="FunFam" id="3.40.50.12160:FF:000003">
    <property type="entry name" value="CDK5 regulatory subunit-associated protein 1"/>
    <property type="match status" value="1"/>
</dbReference>
<dbReference type="FunFam" id="3.80.30.20:FF:000001">
    <property type="entry name" value="tRNA-2-methylthio-N(6)-dimethylallyladenosine synthase 2"/>
    <property type="match status" value="1"/>
</dbReference>
<dbReference type="Gene3D" id="3.40.50.12160">
    <property type="entry name" value="Methylthiotransferase, N-terminal domain"/>
    <property type="match status" value="1"/>
</dbReference>
<dbReference type="Gene3D" id="3.80.30.20">
    <property type="entry name" value="tm_1862 like domain"/>
    <property type="match status" value="1"/>
</dbReference>
<dbReference type="HAMAP" id="MF_01864">
    <property type="entry name" value="tRNA_metthiotr_MiaB"/>
    <property type="match status" value="1"/>
</dbReference>
<dbReference type="InterPro" id="IPR006638">
    <property type="entry name" value="Elp3/MiaA/NifB-like_rSAM"/>
</dbReference>
<dbReference type="InterPro" id="IPR005839">
    <property type="entry name" value="Methylthiotransferase"/>
</dbReference>
<dbReference type="InterPro" id="IPR020612">
    <property type="entry name" value="Methylthiotransferase_CS"/>
</dbReference>
<dbReference type="InterPro" id="IPR013848">
    <property type="entry name" value="Methylthiotransferase_N"/>
</dbReference>
<dbReference type="InterPro" id="IPR038135">
    <property type="entry name" value="Methylthiotransferase_N_sf"/>
</dbReference>
<dbReference type="InterPro" id="IPR006463">
    <property type="entry name" value="MiaB_methiolase"/>
</dbReference>
<dbReference type="InterPro" id="IPR007197">
    <property type="entry name" value="rSAM"/>
</dbReference>
<dbReference type="InterPro" id="IPR023404">
    <property type="entry name" value="rSAM_horseshoe"/>
</dbReference>
<dbReference type="InterPro" id="IPR002792">
    <property type="entry name" value="TRAM_dom"/>
</dbReference>
<dbReference type="NCBIfam" id="TIGR01574">
    <property type="entry name" value="miaB-methiolase"/>
    <property type="match status" value="1"/>
</dbReference>
<dbReference type="NCBIfam" id="TIGR00089">
    <property type="entry name" value="MiaB/RimO family radical SAM methylthiotransferase"/>
    <property type="match status" value="1"/>
</dbReference>
<dbReference type="PANTHER" id="PTHR43020">
    <property type="entry name" value="CDK5 REGULATORY SUBUNIT-ASSOCIATED PROTEIN 1"/>
    <property type="match status" value="1"/>
</dbReference>
<dbReference type="PANTHER" id="PTHR43020:SF2">
    <property type="entry name" value="MITOCHONDRIAL TRNA METHYLTHIOTRANSFERASE CDK5RAP1"/>
    <property type="match status" value="1"/>
</dbReference>
<dbReference type="Pfam" id="PF04055">
    <property type="entry name" value="Radical_SAM"/>
    <property type="match status" value="1"/>
</dbReference>
<dbReference type="Pfam" id="PF01938">
    <property type="entry name" value="TRAM"/>
    <property type="match status" value="1"/>
</dbReference>
<dbReference type="Pfam" id="PF00919">
    <property type="entry name" value="UPF0004"/>
    <property type="match status" value="1"/>
</dbReference>
<dbReference type="SFLD" id="SFLDF00273">
    <property type="entry name" value="(dimethylallyl)adenosine_tRNA"/>
    <property type="match status" value="1"/>
</dbReference>
<dbReference type="SFLD" id="SFLDG01082">
    <property type="entry name" value="B12-binding_domain_containing"/>
    <property type="match status" value="1"/>
</dbReference>
<dbReference type="SFLD" id="SFLDG01061">
    <property type="entry name" value="methylthiotransferase"/>
    <property type="match status" value="1"/>
</dbReference>
<dbReference type="SMART" id="SM00729">
    <property type="entry name" value="Elp3"/>
    <property type="match status" value="1"/>
</dbReference>
<dbReference type="SUPFAM" id="SSF102114">
    <property type="entry name" value="Radical SAM enzymes"/>
    <property type="match status" value="1"/>
</dbReference>
<dbReference type="PROSITE" id="PS51449">
    <property type="entry name" value="MTTASE_N"/>
    <property type="match status" value="1"/>
</dbReference>
<dbReference type="PROSITE" id="PS01278">
    <property type="entry name" value="MTTASE_RADICAL"/>
    <property type="match status" value="1"/>
</dbReference>
<dbReference type="PROSITE" id="PS51918">
    <property type="entry name" value="RADICAL_SAM"/>
    <property type="match status" value="1"/>
</dbReference>
<dbReference type="PROSITE" id="PS50926">
    <property type="entry name" value="TRAM"/>
    <property type="match status" value="1"/>
</dbReference>
<protein>
    <recommendedName>
        <fullName evidence="1">tRNA-2-methylthio-N(6)-dimethylallyladenosine synthase</fullName>
        <ecNumber evidence="1">2.8.4.3</ecNumber>
    </recommendedName>
    <alternativeName>
        <fullName evidence="1">(Dimethylallyl)adenosine tRNA methylthiotransferase MiaB</fullName>
    </alternativeName>
    <alternativeName>
        <fullName evidence="1">tRNA-i(6)A37 methylthiotransferase</fullName>
    </alternativeName>
</protein>
<comment type="function">
    <text evidence="1">Catalyzes the methylthiolation of N6-(dimethylallyl)adenosine (i(6)A), leading to the formation of 2-methylthio-N6-(dimethylallyl)adenosine (ms(2)i(6)A) at position 37 in tRNAs that read codons beginning with uridine.</text>
</comment>
<comment type="catalytic activity">
    <reaction evidence="1">
        <text>N(6)-dimethylallyladenosine(37) in tRNA + (sulfur carrier)-SH + AH2 + 2 S-adenosyl-L-methionine = 2-methylsulfanyl-N(6)-dimethylallyladenosine(37) in tRNA + (sulfur carrier)-H + 5'-deoxyadenosine + L-methionine + A + S-adenosyl-L-homocysteine + 2 H(+)</text>
        <dbReference type="Rhea" id="RHEA:37067"/>
        <dbReference type="Rhea" id="RHEA-COMP:10375"/>
        <dbReference type="Rhea" id="RHEA-COMP:10376"/>
        <dbReference type="Rhea" id="RHEA-COMP:14737"/>
        <dbReference type="Rhea" id="RHEA-COMP:14739"/>
        <dbReference type="ChEBI" id="CHEBI:13193"/>
        <dbReference type="ChEBI" id="CHEBI:15378"/>
        <dbReference type="ChEBI" id="CHEBI:17319"/>
        <dbReference type="ChEBI" id="CHEBI:17499"/>
        <dbReference type="ChEBI" id="CHEBI:29917"/>
        <dbReference type="ChEBI" id="CHEBI:57844"/>
        <dbReference type="ChEBI" id="CHEBI:57856"/>
        <dbReference type="ChEBI" id="CHEBI:59789"/>
        <dbReference type="ChEBI" id="CHEBI:64428"/>
        <dbReference type="ChEBI" id="CHEBI:74415"/>
        <dbReference type="ChEBI" id="CHEBI:74417"/>
        <dbReference type="EC" id="2.8.4.3"/>
    </reaction>
</comment>
<comment type="cofactor">
    <cofactor evidence="1">
        <name>[4Fe-4S] cluster</name>
        <dbReference type="ChEBI" id="CHEBI:49883"/>
    </cofactor>
    <text evidence="1">Binds 2 [4Fe-4S] clusters. One cluster is coordinated with 3 cysteines and an exchangeable S-adenosyl-L-methionine.</text>
</comment>
<comment type="subunit">
    <text evidence="1">Monomer.</text>
</comment>
<comment type="subcellular location">
    <subcellularLocation>
        <location evidence="1">Cytoplasm</location>
    </subcellularLocation>
</comment>
<comment type="similarity">
    <text evidence="1">Belongs to the methylthiotransferase family. MiaB subfamily.</text>
</comment>
<proteinExistence type="inferred from homology"/>
<feature type="chain" id="PRO_0000374160" description="tRNA-2-methylthio-N(6)-dimethylallyladenosine synthase">
    <location>
        <begin position="1"/>
        <end position="465"/>
    </location>
</feature>
<feature type="domain" description="MTTase N-terminal" evidence="1">
    <location>
        <begin position="5"/>
        <end position="125"/>
    </location>
</feature>
<feature type="domain" description="Radical SAM core" evidence="2">
    <location>
        <begin position="152"/>
        <end position="384"/>
    </location>
</feature>
<feature type="domain" description="TRAM" evidence="1">
    <location>
        <begin position="387"/>
        <end position="449"/>
    </location>
</feature>
<feature type="binding site" evidence="1">
    <location>
        <position position="14"/>
    </location>
    <ligand>
        <name>[4Fe-4S] cluster</name>
        <dbReference type="ChEBI" id="CHEBI:49883"/>
        <label>1</label>
    </ligand>
</feature>
<feature type="binding site" evidence="1">
    <location>
        <position position="50"/>
    </location>
    <ligand>
        <name>[4Fe-4S] cluster</name>
        <dbReference type="ChEBI" id="CHEBI:49883"/>
        <label>1</label>
    </ligand>
</feature>
<feature type="binding site" evidence="1">
    <location>
        <position position="88"/>
    </location>
    <ligand>
        <name>[4Fe-4S] cluster</name>
        <dbReference type="ChEBI" id="CHEBI:49883"/>
        <label>1</label>
    </ligand>
</feature>
<feature type="binding site" evidence="1">
    <location>
        <position position="166"/>
    </location>
    <ligand>
        <name>[4Fe-4S] cluster</name>
        <dbReference type="ChEBI" id="CHEBI:49883"/>
        <label>2</label>
        <note>4Fe-4S-S-AdoMet</note>
    </ligand>
</feature>
<feature type="binding site" evidence="1">
    <location>
        <position position="170"/>
    </location>
    <ligand>
        <name>[4Fe-4S] cluster</name>
        <dbReference type="ChEBI" id="CHEBI:49883"/>
        <label>2</label>
        <note>4Fe-4S-S-AdoMet</note>
    </ligand>
</feature>
<feature type="binding site" evidence="1">
    <location>
        <position position="173"/>
    </location>
    <ligand>
        <name>[4Fe-4S] cluster</name>
        <dbReference type="ChEBI" id="CHEBI:49883"/>
        <label>2</label>
        <note>4Fe-4S-S-AdoMet</note>
    </ligand>
</feature>
<organism>
    <name type="scientific">Bradyrhizobium diazoefficiens (strain JCM 10833 / BCRC 13528 / IAM 13628 / NBRC 14792 / USDA 110)</name>
    <dbReference type="NCBI Taxonomy" id="224911"/>
    <lineage>
        <taxon>Bacteria</taxon>
        <taxon>Pseudomonadati</taxon>
        <taxon>Pseudomonadota</taxon>
        <taxon>Alphaproteobacteria</taxon>
        <taxon>Hyphomicrobiales</taxon>
        <taxon>Nitrobacteraceae</taxon>
        <taxon>Bradyrhizobium</taxon>
    </lineage>
</organism>
<gene>
    <name evidence="1" type="primary">miaB</name>
    <name type="ordered locus">bll0795</name>
</gene>
<keyword id="KW-0004">4Fe-4S</keyword>
<keyword id="KW-0963">Cytoplasm</keyword>
<keyword id="KW-0408">Iron</keyword>
<keyword id="KW-0411">Iron-sulfur</keyword>
<keyword id="KW-0479">Metal-binding</keyword>
<keyword id="KW-1185">Reference proteome</keyword>
<keyword id="KW-0949">S-adenosyl-L-methionine</keyword>
<keyword id="KW-0808">Transferase</keyword>
<keyword id="KW-0819">tRNA processing</keyword>
<evidence type="ECO:0000255" key="1">
    <source>
        <dbReference type="HAMAP-Rule" id="MF_01864"/>
    </source>
</evidence>
<evidence type="ECO:0000255" key="2">
    <source>
        <dbReference type="PROSITE-ProRule" id="PRU01266"/>
    </source>
</evidence>
<accession>Q89W97</accession>